<feature type="chain" id="PRO_0000190383" description="Recombination protein RecR">
    <location>
        <begin position="1"/>
        <end position="201"/>
    </location>
</feature>
<feature type="domain" description="Toprim" evidence="1">
    <location>
        <begin position="81"/>
        <end position="176"/>
    </location>
</feature>
<feature type="zinc finger region" description="C4-type" evidence="1">
    <location>
        <begin position="57"/>
        <end position="72"/>
    </location>
</feature>
<reference key="1">
    <citation type="journal article" date="2002" name="Nucleic Acids Res.">
        <title>Genome sequence of Shigella flexneri 2a: insights into pathogenicity through comparison with genomes of Escherichia coli K12 and O157.</title>
        <authorList>
            <person name="Jin Q."/>
            <person name="Yuan Z."/>
            <person name="Xu J."/>
            <person name="Wang Y."/>
            <person name="Shen Y."/>
            <person name="Lu W."/>
            <person name="Wang J."/>
            <person name="Liu H."/>
            <person name="Yang J."/>
            <person name="Yang F."/>
            <person name="Zhang X."/>
            <person name="Zhang J."/>
            <person name="Yang G."/>
            <person name="Wu H."/>
            <person name="Qu D."/>
            <person name="Dong J."/>
            <person name="Sun L."/>
            <person name="Xue Y."/>
            <person name="Zhao A."/>
            <person name="Gao Y."/>
            <person name="Zhu J."/>
            <person name="Kan B."/>
            <person name="Ding K."/>
            <person name="Chen S."/>
            <person name="Cheng H."/>
            <person name="Yao Z."/>
            <person name="He B."/>
            <person name="Chen R."/>
            <person name="Ma D."/>
            <person name="Qiang B."/>
            <person name="Wen Y."/>
            <person name="Hou Y."/>
            <person name="Yu J."/>
        </authorList>
    </citation>
    <scope>NUCLEOTIDE SEQUENCE [LARGE SCALE GENOMIC DNA]</scope>
    <source>
        <strain>301 / Serotype 2a</strain>
    </source>
</reference>
<reference key="2">
    <citation type="journal article" date="2003" name="Infect. Immun.">
        <title>Complete genome sequence and comparative genomics of Shigella flexneri serotype 2a strain 2457T.</title>
        <authorList>
            <person name="Wei J."/>
            <person name="Goldberg M.B."/>
            <person name="Burland V."/>
            <person name="Venkatesan M.M."/>
            <person name="Deng W."/>
            <person name="Fournier G."/>
            <person name="Mayhew G.F."/>
            <person name="Plunkett G. III"/>
            <person name="Rose D.J."/>
            <person name="Darling A."/>
            <person name="Mau B."/>
            <person name="Perna N.T."/>
            <person name="Payne S.M."/>
            <person name="Runyen-Janecky L.J."/>
            <person name="Zhou S."/>
            <person name="Schwartz D.C."/>
            <person name="Blattner F.R."/>
        </authorList>
    </citation>
    <scope>NUCLEOTIDE SEQUENCE [LARGE SCALE GENOMIC DNA]</scope>
    <source>
        <strain>ATCC 700930 / 2457T / Serotype 2a</strain>
    </source>
</reference>
<name>RECR_SHIFL</name>
<evidence type="ECO:0000255" key="1">
    <source>
        <dbReference type="HAMAP-Rule" id="MF_00017"/>
    </source>
</evidence>
<keyword id="KW-0227">DNA damage</keyword>
<keyword id="KW-0233">DNA recombination</keyword>
<keyword id="KW-0234">DNA repair</keyword>
<keyword id="KW-0479">Metal-binding</keyword>
<keyword id="KW-1185">Reference proteome</keyword>
<keyword id="KW-0862">Zinc</keyword>
<keyword id="KW-0863">Zinc-finger</keyword>
<organism>
    <name type="scientific">Shigella flexneri</name>
    <dbReference type="NCBI Taxonomy" id="623"/>
    <lineage>
        <taxon>Bacteria</taxon>
        <taxon>Pseudomonadati</taxon>
        <taxon>Pseudomonadota</taxon>
        <taxon>Gammaproteobacteria</taxon>
        <taxon>Enterobacterales</taxon>
        <taxon>Enterobacteriaceae</taxon>
        <taxon>Shigella</taxon>
    </lineage>
</organism>
<protein>
    <recommendedName>
        <fullName evidence="1">Recombination protein RecR</fullName>
    </recommendedName>
</protein>
<comment type="function">
    <text evidence="1">May play a role in DNA repair. It seems to be involved in an RecBC-independent recombinational process of DNA repair. It may act with RecF and RecO.</text>
</comment>
<comment type="similarity">
    <text evidence="1">Belongs to the RecR family.</text>
</comment>
<sequence length="201" mass="21963">MQTSPLLTQLMEALRCLPGVGPKSAQRMAFTLLQRDRSGGMRLAQALTRAMSEIGHCADCRTFTEQEVCNICSNPRRQENGQICVVESPADIYAIEQTGQFSGRYFVLMGHLSPLDGIGPDDIGLDRLEQRLAEEKITEVILATNPTVEGEATANYIAELCAQYDVEASRIAHGVPVGGELEMVDGTTLSHSLAGRHKIRF</sequence>
<proteinExistence type="inferred from homology"/>
<accession>P0A7H9</accession>
<accession>P12727</accession>
<gene>
    <name evidence="1" type="primary">recR</name>
    <name type="ordered locus">SF0417</name>
    <name type="ordered locus">S0424</name>
</gene>
<dbReference type="EMBL" id="AE005674">
    <property type="protein sequence ID" value="AAN42072.1"/>
    <property type="molecule type" value="Genomic_DNA"/>
</dbReference>
<dbReference type="EMBL" id="AE014073">
    <property type="protein sequence ID" value="AAP15949.1"/>
    <property type="molecule type" value="Genomic_DNA"/>
</dbReference>
<dbReference type="RefSeq" id="NP_706365.1">
    <property type="nucleotide sequence ID" value="NC_004337.2"/>
</dbReference>
<dbReference type="RefSeq" id="WP_001195025.1">
    <property type="nucleotide sequence ID" value="NZ_WPGW01000015.1"/>
</dbReference>
<dbReference type="SMR" id="P0A7H9"/>
<dbReference type="STRING" id="198214.SF0417"/>
<dbReference type="PaxDb" id="198214-SF0417"/>
<dbReference type="GeneID" id="1027757"/>
<dbReference type="GeneID" id="93776978"/>
<dbReference type="KEGG" id="sfl:SF0417"/>
<dbReference type="KEGG" id="sfx:S0424"/>
<dbReference type="PATRIC" id="fig|198214.7.peg.479"/>
<dbReference type="HOGENOM" id="CLU_060739_1_2_6"/>
<dbReference type="Proteomes" id="UP000001006">
    <property type="component" value="Chromosome"/>
</dbReference>
<dbReference type="Proteomes" id="UP000002673">
    <property type="component" value="Chromosome"/>
</dbReference>
<dbReference type="GO" id="GO:0003677">
    <property type="term" value="F:DNA binding"/>
    <property type="evidence" value="ECO:0007669"/>
    <property type="project" value="UniProtKB-UniRule"/>
</dbReference>
<dbReference type="GO" id="GO:0008270">
    <property type="term" value="F:zinc ion binding"/>
    <property type="evidence" value="ECO:0007669"/>
    <property type="project" value="UniProtKB-KW"/>
</dbReference>
<dbReference type="GO" id="GO:0006310">
    <property type="term" value="P:DNA recombination"/>
    <property type="evidence" value="ECO:0007669"/>
    <property type="project" value="UniProtKB-UniRule"/>
</dbReference>
<dbReference type="GO" id="GO:0006281">
    <property type="term" value="P:DNA repair"/>
    <property type="evidence" value="ECO:0007669"/>
    <property type="project" value="UniProtKB-UniRule"/>
</dbReference>
<dbReference type="CDD" id="cd01025">
    <property type="entry name" value="TOPRIM_recR"/>
    <property type="match status" value="1"/>
</dbReference>
<dbReference type="FunFam" id="1.10.8.420:FF:000001">
    <property type="entry name" value="Recombination protein RecR"/>
    <property type="match status" value="1"/>
</dbReference>
<dbReference type="FunFam" id="3.40.1360.10:FF:000001">
    <property type="entry name" value="Recombination protein RecR"/>
    <property type="match status" value="1"/>
</dbReference>
<dbReference type="Gene3D" id="3.40.1360.10">
    <property type="match status" value="1"/>
</dbReference>
<dbReference type="Gene3D" id="6.10.250.240">
    <property type="match status" value="1"/>
</dbReference>
<dbReference type="Gene3D" id="1.10.8.420">
    <property type="entry name" value="RecR Domain 1"/>
    <property type="match status" value="1"/>
</dbReference>
<dbReference type="HAMAP" id="MF_00017">
    <property type="entry name" value="RecR"/>
    <property type="match status" value="1"/>
</dbReference>
<dbReference type="InterPro" id="IPR000093">
    <property type="entry name" value="DNA_Rcmb_RecR"/>
</dbReference>
<dbReference type="InterPro" id="IPR023627">
    <property type="entry name" value="Rcmb_RecR"/>
</dbReference>
<dbReference type="InterPro" id="IPR015967">
    <property type="entry name" value="Rcmb_RecR_Znf"/>
</dbReference>
<dbReference type="InterPro" id="IPR006171">
    <property type="entry name" value="TOPRIM_dom"/>
</dbReference>
<dbReference type="InterPro" id="IPR034137">
    <property type="entry name" value="TOPRIM_RecR"/>
</dbReference>
<dbReference type="NCBIfam" id="TIGR00615">
    <property type="entry name" value="recR"/>
    <property type="match status" value="1"/>
</dbReference>
<dbReference type="PANTHER" id="PTHR30446">
    <property type="entry name" value="RECOMBINATION PROTEIN RECR"/>
    <property type="match status" value="1"/>
</dbReference>
<dbReference type="PANTHER" id="PTHR30446:SF0">
    <property type="entry name" value="RECOMBINATION PROTEIN RECR"/>
    <property type="match status" value="1"/>
</dbReference>
<dbReference type="Pfam" id="PF21175">
    <property type="entry name" value="RecR_C"/>
    <property type="match status" value="1"/>
</dbReference>
<dbReference type="Pfam" id="PF21176">
    <property type="entry name" value="RecR_HhH"/>
    <property type="match status" value="1"/>
</dbReference>
<dbReference type="Pfam" id="PF02132">
    <property type="entry name" value="RecR_ZnF"/>
    <property type="match status" value="1"/>
</dbReference>
<dbReference type="Pfam" id="PF13662">
    <property type="entry name" value="Toprim_4"/>
    <property type="match status" value="1"/>
</dbReference>
<dbReference type="SMART" id="SM00493">
    <property type="entry name" value="TOPRIM"/>
    <property type="match status" value="1"/>
</dbReference>
<dbReference type="SUPFAM" id="SSF111304">
    <property type="entry name" value="Recombination protein RecR"/>
    <property type="match status" value="1"/>
</dbReference>
<dbReference type="PROSITE" id="PS01300">
    <property type="entry name" value="RECR"/>
    <property type="match status" value="1"/>
</dbReference>
<dbReference type="PROSITE" id="PS50880">
    <property type="entry name" value="TOPRIM"/>
    <property type="match status" value="1"/>
</dbReference>